<evidence type="ECO:0000250" key="1"/>
<evidence type="ECO:0000255" key="2">
    <source>
        <dbReference type="HAMAP-Rule" id="MF_00492"/>
    </source>
</evidence>
<organism>
    <name type="scientific">Pseudomonas syringae pv. syringae (strain B728a)</name>
    <dbReference type="NCBI Taxonomy" id="205918"/>
    <lineage>
        <taxon>Bacteria</taxon>
        <taxon>Pseudomonadati</taxon>
        <taxon>Pseudomonadota</taxon>
        <taxon>Gammaproteobacteria</taxon>
        <taxon>Pseudomonadales</taxon>
        <taxon>Pseudomonadaceae</taxon>
        <taxon>Pseudomonas</taxon>
        <taxon>Pseudomonas syringae</taxon>
    </lineage>
</organism>
<keyword id="KW-0963">Cytoplasm</keyword>
<keyword id="KW-0570">Pentose shunt</keyword>
<keyword id="KW-0704">Schiff base</keyword>
<keyword id="KW-0808">Transferase</keyword>
<comment type="function">
    <text evidence="2">Transaldolase is important for the balance of metabolites in the pentose-phosphate pathway.</text>
</comment>
<comment type="catalytic activity">
    <reaction evidence="2">
        <text>D-sedoheptulose 7-phosphate + D-glyceraldehyde 3-phosphate = D-erythrose 4-phosphate + beta-D-fructose 6-phosphate</text>
        <dbReference type="Rhea" id="RHEA:17053"/>
        <dbReference type="ChEBI" id="CHEBI:16897"/>
        <dbReference type="ChEBI" id="CHEBI:57483"/>
        <dbReference type="ChEBI" id="CHEBI:57634"/>
        <dbReference type="ChEBI" id="CHEBI:59776"/>
        <dbReference type="EC" id="2.2.1.2"/>
    </reaction>
</comment>
<comment type="pathway">
    <text evidence="2">Carbohydrate degradation; pentose phosphate pathway; D-glyceraldehyde 3-phosphate and beta-D-fructose 6-phosphate from D-ribose 5-phosphate and D-xylulose 5-phosphate (non-oxidative stage): step 2/3.</text>
</comment>
<comment type="subunit">
    <text evidence="1">Homodimer.</text>
</comment>
<comment type="subcellular location">
    <subcellularLocation>
        <location evidence="2">Cytoplasm</location>
    </subcellularLocation>
</comment>
<comment type="similarity">
    <text evidence="2">Belongs to the transaldolase family. Type 1 subfamily.</text>
</comment>
<reference key="1">
    <citation type="journal article" date="2005" name="Proc. Natl. Acad. Sci. U.S.A.">
        <title>Comparison of the complete genome sequences of Pseudomonas syringae pv. syringae B728a and pv. tomato DC3000.</title>
        <authorList>
            <person name="Feil H."/>
            <person name="Feil W.S."/>
            <person name="Chain P."/>
            <person name="Larimer F."/>
            <person name="Dibartolo G."/>
            <person name="Copeland A."/>
            <person name="Lykidis A."/>
            <person name="Trong S."/>
            <person name="Nolan M."/>
            <person name="Goltsman E."/>
            <person name="Thiel J."/>
            <person name="Malfatti S."/>
            <person name="Loper J.E."/>
            <person name="Lapidus A."/>
            <person name="Detter J.C."/>
            <person name="Land M."/>
            <person name="Richardson P.M."/>
            <person name="Kyrpides N.C."/>
            <person name="Ivanova N."/>
            <person name="Lindow S.E."/>
        </authorList>
    </citation>
    <scope>NUCLEOTIDE SEQUENCE [LARGE SCALE GENOMIC DNA]</scope>
    <source>
        <strain>B728a</strain>
    </source>
</reference>
<sequence length="313" mass="34257">MTSKLDQLKKFTTVVADTGDFGAIKSLEPEDATTNPSLLLKAASDANNAKMLGEAFDGSKGDIGLACDRFAVAIGQEILKVVPGRVSTEVDARLSFDTNALIERSERLIGLYDAAGIKRDRVLIKLAATWEGIRAAEKLEKDGIQTNLTLLFSFAQAVACAEAGVFLISPFVGRIYDWYKKSTGTDYTGAEDPGVQSVTRIYNYYKANDFKTVVMGASFRNLNQIEQLAGCDRLTISTDLLKKLAEDTGTLERKLTPDKAGEKRSDTVKNLTESQFRWASNEDAMATEKLAEGIRQFARDQEKLEALLSAKKA</sequence>
<feature type="chain" id="PRO_0000230964" description="Transaldolase">
    <location>
        <begin position="1"/>
        <end position="313"/>
    </location>
</feature>
<feature type="active site" description="Schiff-base intermediate with substrate" evidence="2">
    <location>
        <position position="125"/>
    </location>
</feature>
<proteinExistence type="inferred from homology"/>
<accession>Q4ZV64</accession>
<gene>
    <name evidence="2" type="primary">tal</name>
    <name type="ordered locus">Psyr_1914</name>
</gene>
<protein>
    <recommendedName>
        <fullName evidence="2">Transaldolase</fullName>
        <ecNumber evidence="2">2.2.1.2</ecNumber>
    </recommendedName>
</protein>
<name>TAL_PSEU2</name>
<dbReference type="EC" id="2.2.1.2" evidence="2"/>
<dbReference type="EMBL" id="CP000075">
    <property type="protein sequence ID" value="AAY36958.1"/>
    <property type="molecule type" value="Genomic_DNA"/>
</dbReference>
<dbReference type="RefSeq" id="WP_011267310.1">
    <property type="nucleotide sequence ID" value="NC_007005.1"/>
</dbReference>
<dbReference type="RefSeq" id="YP_234996.1">
    <property type="nucleotide sequence ID" value="NC_007005.1"/>
</dbReference>
<dbReference type="SMR" id="Q4ZV64"/>
<dbReference type="STRING" id="205918.Psyr_1914"/>
<dbReference type="KEGG" id="psb:Psyr_1914"/>
<dbReference type="PATRIC" id="fig|205918.7.peg.1958"/>
<dbReference type="eggNOG" id="COG0176">
    <property type="taxonomic scope" value="Bacteria"/>
</dbReference>
<dbReference type="HOGENOM" id="CLU_047470_0_1_6"/>
<dbReference type="OrthoDB" id="9809101at2"/>
<dbReference type="UniPathway" id="UPA00115">
    <property type="reaction ID" value="UER00414"/>
</dbReference>
<dbReference type="Proteomes" id="UP000000426">
    <property type="component" value="Chromosome"/>
</dbReference>
<dbReference type="GO" id="GO:0005829">
    <property type="term" value="C:cytosol"/>
    <property type="evidence" value="ECO:0007669"/>
    <property type="project" value="TreeGrafter"/>
</dbReference>
<dbReference type="GO" id="GO:0004801">
    <property type="term" value="F:transaldolase activity"/>
    <property type="evidence" value="ECO:0000250"/>
    <property type="project" value="UniProtKB"/>
</dbReference>
<dbReference type="GO" id="GO:0005975">
    <property type="term" value="P:carbohydrate metabolic process"/>
    <property type="evidence" value="ECO:0007669"/>
    <property type="project" value="InterPro"/>
</dbReference>
<dbReference type="GO" id="GO:0006098">
    <property type="term" value="P:pentose-phosphate shunt"/>
    <property type="evidence" value="ECO:0007669"/>
    <property type="project" value="UniProtKB-UniRule"/>
</dbReference>
<dbReference type="CDD" id="cd00957">
    <property type="entry name" value="Transaldolase_TalAB"/>
    <property type="match status" value="1"/>
</dbReference>
<dbReference type="FunFam" id="3.20.20.70:FF:000002">
    <property type="entry name" value="Transaldolase"/>
    <property type="match status" value="1"/>
</dbReference>
<dbReference type="Gene3D" id="3.20.20.70">
    <property type="entry name" value="Aldolase class I"/>
    <property type="match status" value="1"/>
</dbReference>
<dbReference type="HAMAP" id="MF_00492">
    <property type="entry name" value="Transaldolase_1"/>
    <property type="match status" value="1"/>
</dbReference>
<dbReference type="InterPro" id="IPR013785">
    <property type="entry name" value="Aldolase_TIM"/>
</dbReference>
<dbReference type="InterPro" id="IPR001585">
    <property type="entry name" value="TAL/FSA"/>
</dbReference>
<dbReference type="InterPro" id="IPR004730">
    <property type="entry name" value="Transaldolase_1"/>
</dbReference>
<dbReference type="InterPro" id="IPR018225">
    <property type="entry name" value="Transaldolase_AS"/>
</dbReference>
<dbReference type="NCBIfam" id="NF009001">
    <property type="entry name" value="PRK12346.1"/>
    <property type="match status" value="1"/>
</dbReference>
<dbReference type="NCBIfam" id="TIGR00874">
    <property type="entry name" value="talAB"/>
    <property type="match status" value="1"/>
</dbReference>
<dbReference type="PANTHER" id="PTHR10683">
    <property type="entry name" value="TRANSALDOLASE"/>
    <property type="match status" value="1"/>
</dbReference>
<dbReference type="PANTHER" id="PTHR10683:SF18">
    <property type="entry name" value="TRANSALDOLASE"/>
    <property type="match status" value="1"/>
</dbReference>
<dbReference type="Pfam" id="PF00923">
    <property type="entry name" value="TAL_FSA"/>
    <property type="match status" value="1"/>
</dbReference>
<dbReference type="SUPFAM" id="SSF51569">
    <property type="entry name" value="Aldolase"/>
    <property type="match status" value="1"/>
</dbReference>
<dbReference type="PROSITE" id="PS01054">
    <property type="entry name" value="TRANSALDOLASE_1"/>
    <property type="match status" value="1"/>
</dbReference>
<dbReference type="PROSITE" id="PS00958">
    <property type="entry name" value="TRANSALDOLASE_2"/>
    <property type="match status" value="1"/>
</dbReference>